<name>CWC27_DEBHA</name>
<protein>
    <recommendedName>
        <fullName>Peptidyl-prolyl isomerase CWC27</fullName>
        <shortName>PPIase CWC27</shortName>
        <ecNumber>5.2.1.8</ecNumber>
    </recommendedName>
    <alternativeName>
        <fullName>Rotamase CWC27</fullName>
    </alternativeName>
</protein>
<comment type="function">
    <text evidence="1">PPIases accelerate the folding of proteins. It catalyzes the cis-trans isomerization of proline imidic peptide bonds in oligopeptides. Involved in pre-mRNA splicing (By similarity).</text>
</comment>
<comment type="catalytic activity">
    <reaction>
        <text>[protein]-peptidylproline (omega=180) = [protein]-peptidylproline (omega=0)</text>
        <dbReference type="Rhea" id="RHEA:16237"/>
        <dbReference type="Rhea" id="RHEA-COMP:10747"/>
        <dbReference type="Rhea" id="RHEA-COMP:10748"/>
        <dbReference type="ChEBI" id="CHEBI:83833"/>
        <dbReference type="ChEBI" id="CHEBI:83834"/>
        <dbReference type="EC" id="5.2.1.8"/>
    </reaction>
</comment>
<comment type="subunit">
    <text evidence="1">Associated with the spliceosome.</text>
</comment>
<comment type="subcellular location">
    <subcellularLocation>
        <location evidence="1">Cytoplasm</location>
    </subcellularLocation>
    <subcellularLocation>
        <location evidence="1">Nucleus</location>
    </subcellularLocation>
</comment>
<comment type="similarity">
    <text evidence="4">Belongs to the cyclophilin-type PPIase family. CWC27 subfamily.</text>
</comment>
<reference key="1">
    <citation type="journal article" date="2004" name="Nature">
        <title>Genome evolution in yeasts.</title>
        <authorList>
            <person name="Dujon B."/>
            <person name="Sherman D."/>
            <person name="Fischer G."/>
            <person name="Durrens P."/>
            <person name="Casaregola S."/>
            <person name="Lafontaine I."/>
            <person name="de Montigny J."/>
            <person name="Marck C."/>
            <person name="Neuveglise C."/>
            <person name="Talla E."/>
            <person name="Goffard N."/>
            <person name="Frangeul L."/>
            <person name="Aigle M."/>
            <person name="Anthouard V."/>
            <person name="Babour A."/>
            <person name="Barbe V."/>
            <person name="Barnay S."/>
            <person name="Blanchin S."/>
            <person name="Beckerich J.-M."/>
            <person name="Beyne E."/>
            <person name="Bleykasten C."/>
            <person name="Boisrame A."/>
            <person name="Boyer J."/>
            <person name="Cattolico L."/>
            <person name="Confanioleri F."/>
            <person name="de Daruvar A."/>
            <person name="Despons L."/>
            <person name="Fabre E."/>
            <person name="Fairhead C."/>
            <person name="Ferry-Dumazet H."/>
            <person name="Groppi A."/>
            <person name="Hantraye F."/>
            <person name="Hennequin C."/>
            <person name="Jauniaux N."/>
            <person name="Joyet P."/>
            <person name="Kachouri R."/>
            <person name="Kerrest A."/>
            <person name="Koszul R."/>
            <person name="Lemaire M."/>
            <person name="Lesur I."/>
            <person name="Ma L."/>
            <person name="Muller H."/>
            <person name="Nicaud J.-M."/>
            <person name="Nikolski M."/>
            <person name="Oztas S."/>
            <person name="Ozier-Kalogeropoulos O."/>
            <person name="Pellenz S."/>
            <person name="Potier S."/>
            <person name="Richard G.-F."/>
            <person name="Straub M.-L."/>
            <person name="Suleau A."/>
            <person name="Swennen D."/>
            <person name="Tekaia F."/>
            <person name="Wesolowski-Louvel M."/>
            <person name="Westhof E."/>
            <person name="Wirth B."/>
            <person name="Zeniou-Meyer M."/>
            <person name="Zivanovic Y."/>
            <person name="Bolotin-Fukuhara M."/>
            <person name="Thierry A."/>
            <person name="Bouchier C."/>
            <person name="Caudron B."/>
            <person name="Scarpelli C."/>
            <person name="Gaillardin C."/>
            <person name="Weissenbach J."/>
            <person name="Wincker P."/>
            <person name="Souciet J.-L."/>
        </authorList>
    </citation>
    <scope>NUCLEOTIDE SEQUENCE [LARGE SCALE GENOMIC DNA]</scope>
    <source>
        <strain>ATCC 36239 / CBS 767 / BCRC 21394 / JCM 1990 / NBRC 0083 / IGC 2968</strain>
    </source>
</reference>
<accession>Q6BWH6</accession>
<dbReference type="EC" id="5.2.1.8"/>
<dbReference type="EMBL" id="CR382134">
    <property type="protein sequence ID" value="CAG85447.1"/>
    <property type="molecule type" value="Genomic_DNA"/>
</dbReference>
<dbReference type="RefSeq" id="XP_457443.1">
    <property type="nucleotide sequence ID" value="XM_457443.1"/>
</dbReference>
<dbReference type="SMR" id="Q6BWH6"/>
<dbReference type="FunCoup" id="Q6BWH6">
    <property type="interactions" value="1179"/>
</dbReference>
<dbReference type="STRING" id="284592.Q6BWH6"/>
<dbReference type="GeneID" id="2913378"/>
<dbReference type="KEGG" id="dha:DEHA2B11308g"/>
<dbReference type="VEuPathDB" id="FungiDB:DEHA2B11308g"/>
<dbReference type="eggNOG" id="KOG0885">
    <property type="taxonomic scope" value="Eukaryota"/>
</dbReference>
<dbReference type="HOGENOM" id="CLU_012062_14_0_1"/>
<dbReference type="InParanoid" id="Q6BWH6"/>
<dbReference type="OMA" id="RNTWFIT"/>
<dbReference type="OrthoDB" id="442970at2759"/>
<dbReference type="Proteomes" id="UP000000599">
    <property type="component" value="Chromosome B"/>
</dbReference>
<dbReference type="GO" id="GO:0071013">
    <property type="term" value="C:catalytic step 2 spliceosome"/>
    <property type="evidence" value="ECO:0007669"/>
    <property type="project" value="TreeGrafter"/>
</dbReference>
<dbReference type="GO" id="GO:0005737">
    <property type="term" value="C:cytoplasm"/>
    <property type="evidence" value="ECO:0007669"/>
    <property type="project" value="UniProtKB-SubCell"/>
</dbReference>
<dbReference type="GO" id="GO:0003755">
    <property type="term" value="F:peptidyl-prolyl cis-trans isomerase activity"/>
    <property type="evidence" value="ECO:0007669"/>
    <property type="project" value="UniProtKB-KW"/>
</dbReference>
<dbReference type="GO" id="GO:0006397">
    <property type="term" value="P:mRNA processing"/>
    <property type="evidence" value="ECO:0007669"/>
    <property type="project" value="UniProtKB-KW"/>
</dbReference>
<dbReference type="GO" id="GO:0008380">
    <property type="term" value="P:RNA splicing"/>
    <property type="evidence" value="ECO:0007669"/>
    <property type="project" value="UniProtKB-KW"/>
</dbReference>
<dbReference type="Gene3D" id="2.40.100.10">
    <property type="entry name" value="Cyclophilin-like"/>
    <property type="match status" value="1"/>
</dbReference>
<dbReference type="InterPro" id="IPR029000">
    <property type="entry name" value="Cyclophilin-like_dom_sf"/>
</dbReference>
<dbReference type="InterPro" id="IPR002130">
    <property type="entry name" value="Cyclophilin-type_PPIase_dom"/>
</dbReference>
<dbReference type="InterPro" id="IPR044666">
    <property type="entry name" value="Cyclophilin_A-like"/>
</dbReference>
<dbReference type="PANTHER" id="PTHR45625">
    <property type="entry name" value="PEPTIDYL-PROLYL CIS-TRANS ISOMERASE-RELATED"/>
    <property type="match status" value="1"/>
</dbReference>
<dbReference type="PANTHER" id="PTHR45625:SF6">
    <property type="entry name" value="SPLICEOSOME-ASSOCIATED PROTEIN CWC27 HOMOLOG"/>
    <property type="match status" value="1"/>
</dbReference>
<dbReference type="Pfam" id="PF00160">
    <property type="entry name" value="Pro_isomerase"/>
    <property type="match status" value="1"/>
</dbReference>
<dbReference type="SUPFAM" id="SSF50891">
    <property type="entry name" value="Cyclophilin-like"/>
    <property type="match status" value="1"/>
</dbReference>
<dbReference type="PROSITE" id="PS50072">
    <property type="entry name" value="CSA_PPIASE_2"/>
    <property type="match status" value="1"/>
</dbReference>
<organism>
    <name type="scientific">Debaryomyces hansenii (strain ATCC 36239 / CBS 767 / BCRC 21394 / JCM 1990 / NBRC 0083 / IGC 2968)</name>
    <name type="common">Yeast</name>
    <name type="synonym">Torulaspora hansenii</name>
    <dbReference type="NCBI Taxonomy" id="284592"/>
    <lineage>
        <taxon>Eukaryota</taxon>
        <taxon>Fungi</taxon>
        <taxon>Dikarya</taxon>
        <taxon>Ascomycota</taxon>
        <taxon>Saccharomycotina</taxon>
        <taxon>Pichiomycetes</taxon>
        <taxon>Debaryomycetaceae</taxon>
        <taxon>Debaryomyces</taxon>
    </lineage>
</organism>
<gene>
    <name type="primary">CWC27</name>
    <name type="ordered locus">DEHA2B11308g</name>
</gene>
<proteinExistence type="inferred from homology"/>
<sequence>MSSLEPATTAKVALITTKGPIEIELWAKEVPNITRVFIQNCLDKKYIGTTFNKVIKDYLVQTSKIKEPATLKLKDEFHSRLKFNKRGLVGAVHDDKRNSNNVDSLFITLKPTPEFNNNYVLFGKIMGDSIYNVVKINESELKSEETPMYPAEITDIKILVQYFDDLVESKEHIAEPAKKKAKKAKKPRVKLDYTLEDEEDTGFKMKSAHDLLSDSKLSNKLYANKKKGPSENNEKQKTIEKAQDSSMETKKIVPERPDYKGSEEIENETKITSSENMNHETKQDKPNYKAKLDRNPNIDSDYDSDLDLSSSESIDLFAFKQSNFQSS</sequence>
<feature type="chain" id="PRO_0000064183" description="Peptidyl-prolyl isomerase CWC27">
    <location>
        <begin position="1"/>
        <end position="327"/>
    </location>
</feature>
<feature type="domain" description="PPIase cyclophilin-type" evidence="2">
    <location>
        <begin position="8"/>
        <end position="158"/>
    </location>
</feature>
<feature type="region of interest" description="Disordered" evidence="3">
    <location>
        <begin position="223"/>
        <end position="307"/>
    </location>
</feature>
<feature type="compositionally biased region" description="Basic and acidic residues" evidence="3">
    <location>
        <begin position="228"/>
        <end position="269"/>
    </location>
</feature>
<feature type="compositionally biased region" description="Basic and acidic residues" evidence="3">
    <location>
        <begin position="277"/>
        <end position="296"/>
    </location>
</feature>
<evidence type="ECO:0000250" key="1"/>
<evidence type="ECO:0000255" key="2">
    <source>
        <dbReference type="PROSITE-ProRule" id="PRU00156"/>
    </source>
</evidence>
<evidence type="ECO:0000256" key="3">
    <source>
        <dbReference type="SAM" id="MobiDB-lite"/>
    </source>
</evidence>
<evidence type="ECO:0000305" key="4"/>
<keyword id="KW-0963">Cytoplasm</keyword>
<keyword id="KW-0413">Isomerase</keyword>
<keyword id="KW-0507">mRNA processing</keyword>
<keyword id="KW-0508">mRNA splicing</keyword>
<keyword id="KW-0539">Nucleus</keyword>
<keyword id="KW-1185">Reference proteome</keyword>
<keyword id="KW-0697">Rotamase</keyword>
<keyword id="KW-0747">Spliceosome</keyword>